<sequence>MITTKELRNKFINYFESKNHSHQPSSSLIPFGDDTLLFTNAGMVQFKDVFLGIEKKDFSRAVTVQKCLRAGGKHNDLDNVGYTARHHTFFEMLGNFSFGDYFKKEAISFAWEFLTKEIKLPVEKLWVTIYASDDEAFDVWHKHIGLAKERIIRIDSSDNFWSMGDTGPCGPCTEIFYDHGEDVAGGLPGTPEQDGDRYIEIWNIVFMQYNRHADGSTTDLPKPSVDTGMGLERISAVLQNVHSNYEIDLFQALIKKAQQVTHAKDINSPSLKVIADHIRACAFLIADGVLPANEGRGYVLRRIIRRAIRHGNKVGAKEIFFYKLVAELVSQMGEAYSQLIDKRELIEKTLIKEEKLFLKTIENGIKIFDAEIENLKDNTISGEVAFKLYDTYGFPFDLTADMAREKGLKVDEQAFLAQMQIQKQRSKEAGKFNVDYNSLINSQVKSEFRGYSTLIEDAKVLEIYQDDQLVASTSEQVSAVVVLDKTPFYAESGGQVGDKGILEGVGFEFVVEDVQKSGEAILHIGKLVKGRLNLNDELTARVSDKPRLATAANHSATHLLHKALKLVLGGHAEQKGSLVDEDRLRFDFTHDKAISRSEIEQIELLVNQQIRANYPVTTIEISQQKAKSLGAEALFGEKYGDIVRVISMGDFSIELCGGTHVAYTGDIGLFKVTSEGSIASGVRRIEAVTADKAIRHTFTNENKIIAIKDSLKANDINLIDKIKSMLEQIKNQEKQIAKLKKELLSGSSNDIKETNIGDIKVVVANVDGVDVKTLRNKIDDYKSKNTKVIAVLTTTNADKVQFVIGVSNALTTLIKAGDIAKELSSHIDGKGGGRADMAQGGGNNSANIDQALSQVEKFILNNIKE</sequence>
<evidence type="ECO:0000255" key="1">
    <source>
        <dbReference type="HAMAP-Rule" id="MF_00036"/>
    </source>
</evidence>
<organism>
    <name type="scientific">Francisella tularensis subsp. mediasiatica (strain FSC147)</name>
    <dbReference type="NCBI Taxonomy" id="441952"/>
    <lineage>
        <taxon>Bacteria</taxon>
        <taxon>Pseudomonadati</taxon>
        <taxon>Pseudomonadota</taxon>
        <taxon>Gammaproteobacteria</taxon>
        <taxon>Thiotrichales</taxon>
        <taxon>Francisellaceae</taxon>
        <taxon>Francisella</taxon>
    </lineage>
</organism>
<proteinExistence type="inferred from homology"/>
<gene>
    <name evidence="1" type="primary">alaS</name>
    <name type="ordered locus">FTM_1240</name>
</gene>
<reference key="1">
    <citation type="journal article" date="2009" name="PLoS Pathog.">
        <title>Molecular evolutionary consequences of niche restriction in Francisella tularensis, a facultative intracellular pathogen.</title>
        <authorList>
            <person name="Larsson P."/>
            <person name="Elfsmark D."/>
            <person name="Svensson K."/>
            <person name="Wikstroem P."/>
            <person name="Forsman M."/>
            <person name="Brettin T."/>
            <person name="Keim P."/>
            <person name="Johansson A."/>
        </authorList>
    </citation>
    <scope>NUCLEOTIDE SEQUENCE [LARGE SCALE GENOMIC DNA]</scope>
    <source>
        <strain>FSC147</strain>
    </source>
</reference>
<accession>B2SH99</accession>
<name>SYA_FRATM</name>
<protein>
    <recommendedName>
        <fullName evidence="1">Alanine--tRNA ligase</fullName>
        <ecNumber evidence="1">6.1.1.7</ecNumber>
    </recommendedName>
    <alternativeName>
        <fullName evidence="1">Alanyl-tRNA synthetase</fullName>
        <shortName evidence="1">AlaRS</shortName>
    </alternativeName>
</protein>
<feature type="chain" id="PRO_0000347613" description="Alanine--tRNA ligase">
    <location>
        <begin position="1"/>
        <end position="865"/>
    </location>
</feature>
<feature type="binding site" evidence="1">
    <location>
        <position position="554"/>
    </location>
    <ligand>
        <name>Zn(2+)</name>
        <dbReference type="ChEBI" id="CHEBI:29105"/>
    </ligand>
</feature>
<feature type="binding site" evidence="1">
    <location>
        <position position="558"/>
    </location>
    <ligand>
        <name>Zn(2+)</name>
        <dbReference type="ChEBI" id="CHEBI:29105"/>
    </ligand>
</feature>
<feature type="binding site" evidence="1">
    <location>
        <position position="656"/>
    </location>
    <ligand>
        <name>Zn(2+)</name>
        <dbReference type="ChEBI" id="CHEBI:29105"/>
    </ligand>
</feature>
<feature type="binding site" evidence="1">
    <location>
        <position position="660"/>
    </location>
    <ligand>
        <name>Zn(2+)</name>
        <dbReference type="ChEBI" id="CHEBI:29105"/>
    </ligand>
</feature>
<keyword id="KW-0030">Aminoacyl-tRNA synthetase</keyword>
<keyword id="KW-0067">ATP-binding</keyword>
<keyword id="KW-0963">Cytoplasm</keyword>
<keyword id="KW-0436">Ligase</keyword>
<keyword id="KW-0479">Metal-binding</keyword>
<keyword id="KW-0547">Nucleotide-binding</keyword>
<keyword id="KW-0648">Protein biosynthesis</keyword>
<keyword id="KW-0694">RNA-binding</keyword>
<keyword id="KW-0820">tRNA-binding</keyword>
<keyword id="KW-0862">Zinc</keyword>
<dbReference type="EC" id="6.1.1.7" evidence="1"/>
<dbReference type="EMBL" id="CP000915">
    <property type="protein sequence ID" value="ACD31107.1"/>
    <property type="molecule type" value="Genomic_DNA"/>
</dbReference>
<dbReference type="SMR" id="B2SH99"/>
<dbReference type="KEGG" id="ftm:FTM_1240"/>
<dbReference type="HOGENOM" id="CLU_004485_1_1_6"/>
<dbReference type="GO" id="GO:0005829">
    <property type="term" value="C:cytosol"/>
    <property type="evidence" value="ECO:0007669"/>
    <property type="project" value="TreeGrafter"/>
</dbReference>
<dbReference type="GO" id="GO:0004813">
    <property type="term" value="F:alanine-tRNA ligase activity"/>
    <property type="evidence" value="ECO:0007669"/>
    <property type="project" value="UniProtKB-UniRule"/>
</dbReference>
<dbReference type="GO" id="GO:0002161">
    <property type="term" value="F:aminoacyl-tRNA deacylase activity"/>
    <property type="evidence" value="ECO:0007669"/>
    <property type="project" value="TreeGrafter"/>
</dbReference>
<dbReference type="GO" id="GO:0005524">
    <property type="term" value="F:ATP binding"/>
    <property type="evidence" value="ECO:0007669"/>
    <property type="project" value="UniProtKB-UniRule"/>
</dbReference>
<dbReference type="GO" id="GO:0000049">
    <property type="term" value="F:tRNA binding"/>
    <property type="evidence" value="ECO:0007669"/>
    <property type="project" value="UniProtKB-KW"/>
</dbReference>
<dbReference type="GO" id="GO:0008270">
    <property type="term" value="F:zinc ion binding"/>
    <property type="evidence" value="ECO:0007669"/>
    <property type="project" value="UniProtKB-UniRule"/>
</dbReference>
<dbReference type="GO" id="GO:0006419">
    <property type="term" value="P:alanyl-tRNA aminoacylation"/>
    <property type="evidence" value="ECO:0007669"/>
    <property type="project" value="UniProtKB-UniRule"/>
</dbReference>
<dbReference type="GO" id="GO:0045892">
    <property type="term" value="P:negative regulation of DNA-templated transcription"/>
    <property type="evidence" value="ECO:0007669"/>
    <property type="project" value="TreeGrafter"/>
</dbReference>
<dbReference type="CDD" id="cd00673">
    <property type="entry name" value="AlaRS_core"/>
    <property type="match status" value="1"/>
</dbReference>
<dbReference type="FunFam" id="2.40.30.130:FF:000001">
    <property type="entry name" value="Alanine--tRNA ligase"/>
    <property type="match status" value="1"/>
</dbReference>
<dbReference type="FunFam" id="3.10.310.40:FF:000001">
    <property type="entry name" value="Alanine--tRNA ligase"/>
    <property type="match status" value="1"/>
</dbReference>
<dbReference type="FunFam" id="3.30.54.20:FF:000001">
    <property type="entry name" value="Alanine--tRNA ligase"/>
    <property type="match status" value="1"/>
</dbReference>
<dbReference type="FunFam" id="3.30.930.10:FF:000004">
    <property type="entry name" value="Alanine--tRNA ligase"/>
    <property type="match status" value="1"/>
</dbReference>
<dbReference type="FunFam" id="3.30.980.10:FF:000004">
    <property type="entry name" value="Alanine--tRNA ligase, cytoplasmic"/>
    <property type="match status" value="1"/>
</dbReference>
<dbReference type="Gene3D" id="2.40.30.130">
    <property type="match status" value="1"/>
</dbReference>
<dbReference type="Gene3D" id="3.10.310.40">
    <property type="match status" value="1"/>
</dbReference>
<dbReference type="Gene3D" id="3.30.54.20">
    <property type="match status" value="1"/>
</dbReference>
<dbReference type="Gene3D" id="6.10.250.550">
    <property type="match status" value="1"/>
</dbReference>
<dbReference type="Gene3D" id="3.30.930.10">
    <property type="entry name" value="Bira Bifunctional Protein, Domain 2"/>
    <property type="match status" value="1"/>
</dbReference>
<dbReference type="Gene3D" id="3.30.980.10">
    <property type="entry name" value="Threonyl-trna Synthetase, Chain A, domain 2"/>
    <property type="match status" value="1"/>
</dbReference>
<dbReference type="HAMAP" id="MF_00036_B">
    <property type="entry name" value="Ala_tRNA_synth_B"/>
    <property type="match status" value="1"/>
</dbReference>
<dbReference type="InterPro" id="IPR045864">
    <property type="entry name" value="aa-tRNA-synth_II/BPL/LPL"/>
</dbReference>
<dbReference type="InterPro" id="IPR002318">
    <property type="entry name" value="Ala-tRNA-lgiase_IIc"/>
</dbReference>
<dbReference type="InterPro" id="IPR018162">
    <property type="entry name" value="Ala-tRNA-ligase_IIc_anticod-bd"/>
</dbReference>
<dbReference type="InterPro" id="IPR018165">
    <property type="entry name" value="Ala-tRNA-synth_IIc_core"/>
</dbReference>
<dbReference type="InterPro" id="IPR018164">
    <property type="entry name" value="Ala-tRNA-synth_IIc_N"/>
</dbReference>
<dbReference type="InterPro" id="IPR050058">
    <property type="entry name" value="Ala-tRNA_ligase"/>
</dbReference>
<dbReference type="InterPro" id="IPR023033">
    <property type="entry name" value="Ala_tRNA_ligase_euk/bac"/>
</dbReference>
<dbReference type="InterPro" id="IPR003156">
    <property type="entry name" value="DHHA1_dom"/>
</dbReference>
<dbReference type="InterPro" id="IPR018163">
    <property type="entry name" value="Thr/Ala-tRNA-synth_IIc_edit"/>
</dbReference>
<dbReference type="InterPro" id="IPR009000">
    <property type="entry name" value="Transl_B-barrel_sf"/>
</dbReference>
<dbReference type="InterPro" id="IPR012947">
    <property type="entry name" value="tRNA_SAD"/>
</dbReference>
<dbReference type="NCBIfam" id="TIGR00344">
    <property type="entry name" value="alaS"/>
    <property type="match status" value="1"/>
</dbReference>
<dbReference type="PANTHER" id="PTHR11777:SF9">
    <property type="entry name" value="ALANINE--TRNA LIGASE, CYTOPLASMIC"/>
    <property type="match status" value="1"/>
</dbReference>
<dbReference type="PANTHER" id="PTHR11777">
    <property type="entry name" value="ALANYL-TRNA SYNTHETASE"/>
    <property type="match status" value="1"/>
</dbReference>
<dbReference type="Pfam" id="PF02272">
    <property type="entry name" value="DHHA1"/>
    <property type="match status" value="1"/>
</dbReference>
<dbReference type="Pfam" id="PF01411">
    <property type="entry name" value="tRNA-synt_2c"/>
    <property type="match status" value="1"/>
</dbReference>
<dbReference type="Pfam" id="PF07973">
    <property type="entry name" value="tRNA_SAD"/>
    <property type="match status" value="1"/>
</dbReference>
<dbReference type="PRINTS" id="PR00980">
    <property type="entry name" value="TRNASYNTHALA"/>
</dbReference>
<dbReference type="SMART" id="SM00863">
    <property type="entry name" value="tRNA_SAD"/>
    <property type="match status" value="1"/>
</dbReference>
<dbReference type="SUPFAM" id="SSF55681">
    <property type="entry name" value="Class II aaRS and biotin synthetases"/>
    <property type="match status" value="1"/>
</dbReference>
<dbReference type="SUPFAM" id="SSF101353">
    <property type="entry name" value="Putative anticodon-binding domain of alanyl-tRNA synthetase (AlaRS)"/>
    <property type="match status" value="1"/>
</dbReference>
<dbReference type="SUPFAM" id="SSF55186">
    <property type="entry name" value="ThrRS/AlaRS common domain"/>
    <property type="match status" value="1"/>
</dbReference>
<dbReference type="SUPFAM" id="SSF50447">
    <property type="entry name" value="Translation proteins"/>
    <property type="match status" value="1"/>
</dbReference>
<dbReference type="PROSITE" id="PS50860">
    <property type="entry name" value="AA_TRNA_LIGASE_II_ALA"/>
    <property type="match status" value="1"/>
</dbReference>
<comment type="function">
    <text evidence="1">Catalyzes the attachment of alanine to tRNA(Ala) in a two-step reaction: alanine is first activated by ATP to form Ala-AMP and then transferred to the acceptor end of tRNA(Ala). Also edits incorrectly charged Ser-tRNA(Ala) and Gly-tRNA(Ala) via its editing domain.</text>
</comment>
<comment type="catalytic activity">
    <reaction evidence="1">
        <text>tRNA(Ala) + L-alanine + ATP = L-alanyl-tRNA(Ala) + AMP + diphosphate</text>
        <dbReference type="Rhea" id="RHEA:12540"/>
        <dbReference type="Rhea" id="RHEA-COMP:9657"/>
        <dbReference type="Rhea" id="RHEA-COMP:9923"/>
        <dbReference type="ChEBI" id="CHEBI:30616"/>
        <dbReference type="ChEBI" id="CHEBI:33019"/>
        <dbReference type="ChEBI" id="CHEBI:57972"/>
        <dbReference type="ChEBI" id="CHEBI:78442"/>
        <dbReference type="ChEBI" id="CHEBI:78497"/>
        <dbReference type="ChEBI" id="CHEBI:456215"/>
        <dbReference type="EC" id="6.1.1.7"/>
    </reaction>
</comment>
<comment type="cofactor">
    <cofactor evidence="1">
        <name>Zn(2+)</name>
        <dbReference type="ChEBI" id="CHEBI:29105"/>
    </cofactor>
    <text evidence="1">Binds 1 zinc ion per subunit.</text>
</comment>
<comment type="subcellular location">
    <subcellularLocation>
        <location evidence="1">Cytoplasm</location>
    </subcellularLocation>
</comment>
<comment type="domain">
    <text evidence="1">Consists of three domains; the N-terminal catalytic domain, the editing domain and the C-terminal C-Ala domain. The editing domain removes incorrectly charged amino acids, while the C-Ala domain, along with tRNA(Ala), serves as a bridge to cooperatively bring together the editing and aminoacylation centers thus stimulating deacylation of misacylated tRNAs.</text>
</comment>
<comment type="similarity">
    <text evidence="1">Belongs to the class-II aminoacyl-tRNA synthetase family.</text>
</comment>